<organism>
    <name type="scientific">Corcorax melanoramphos</name>
    <name type="common">White-winged chough</name>
    <dbReference type="NCBI Taxonomy" id="9145"/>
    <lineage>
        <taxon>Eukaryota</taxon>
        <taxon>Metazoa</taxon>
        <taxon>Chordata</taxon>
        <taxon>Craniata</taxon>
        <taxon>Vertebrata</taxon>
        <taxon>Euteleostomi</taxon>
        <taxon>Archelosauria</taxon>
        <taxon>Archosauria</taxon>
        <taxon>Dinosauria</taxon>
        <taxon>Saurischia</taxon>
        <taxon>Theropoda</taxon>
        <taxon>Coelurosauria</taxon>
        <taxon>Aves</taxon>
        <taxon>Neognathae</taxon>
        <taxon>Neoaves</taxon>
        <taxon>Telluraves</taxon>
        <taxon>Australaves</taxon>
        <taxon>Passeriformes</taxon>
        <taxon>Corvoidea</taxon>
        <taxon>Corcoracidae</taxon>
        <taxon>Corcorax</taxon>
    </lineage>
</organism>
<keyword id="KW-0249">Electron transport</keyword>
<keyword id="KW-0349">Heme</keyword>
<keyword id="KW-0408">Iron</keyword>
<keyword id="KW-0472">Membrane</keyword>
<keyword id="KW-0479">Metal-binding</keyword>
<keyword id="KW-0496">Mitochondrion</keyword>
<keyword id="KW-0999">Mitochondrion inner membrane</keyword>
<keyword id="KW-0679">Respiratory chain</keyword>
<keyword id="KW-0812">Transmembrane</keyword>
<keyword id="KW-1133">Transmembrane helix</keyword>
<keyword id="KW-0813">Transport</keyword>
<keyword id="KW-0830">Ubiquinone</keyword>
<dbReference type="EMBL" id="M25690">
    <property type="protein sequence ID" value="AAA31708.1"/>
    <property type="molecule type" value="Genomic_DNA"/>
</dbReference>
<dbReference type="PIR" id="A33286">
    <property type="entry name" value="A33286"/>
</dbReference>
<dbReference type="SMR" id="P16364"/>
<dbReference type="GO" id="GO:0005743">
    <property type="term" value="C:mitochondrial inner membrane"/>
    <property type="evidence" value="ECO:0007669"/>
    <property type="project" value="UniProtKB-SubCell"/>
</dbReference>
<dbReference type="GO" id="GO:0046872">
    <property type="term" value="F:metal ion binding"/>
    <property type="evidence" value="ECO:0007669"/>
    <property type="project" value="UniProtKB-KW"/>
</dbReference>
<dbReference type="GO" id="GO:0008121">
    <property type="term" value="F:ubiquinol-cytochrome-c reductase activity"/>
    <property type="evidence" value="ECO:0007669"/>
    <property type="project" value="TreeGrafter"/>
</dbReference>
<dbReference type="GO" id="GO:0006122">
    <property type="term" value="P:mitochondrial electron transport, ubiquinol to cytochrome c"/>
    <property type="evidence" value="ECO:0007669"/>
    <property type="project" value="TreeGrafter"/>
</dbReference>
<dbReference type="Gene3D" id="1.20.810.10">
    <property type="entry name" value="Cytochrome Bc1 Complex, Chain C"/>
    <property type="match status" value="1"/>
</dbReference>
<dbReference type="InterPro" id="IPR005797">
    <property type="entry name" value="Cyt_b/b6_N"/>
</dbReference>
<dbReference type="InterPro" id="IPR027387">
    <property type="entry name" value="Cytb/b6-like_sf"/>
</dbReference>
<dbReference type="InterPro" id="IPR016174">
    <property type="entry name" value="Di-haem_cyt_TM"/>
</dbReference>
<dbReference type="PANTHER" id="PTHR19271">
    <property type="entry name" value="CYTOCHROME B"/>
    <property type="match status" value="1"/>
</dbReference>
<dbReference type="PANTHER" id="PTHR19271:SF16">
    <property type="entry name" value="CYTOCHROME B"/>
    <property type="match status" value="1"/>
</dbReference>
<dbReference type="Pfam" id="PF00033">
    <property type="entry name" value="Cytochrome_B"/>
    <property type="match status" value="1"/>
</dbReference>
<dbReference type="SUPFAM" id="SSF81342">
    <property type="entry name" value="Transmembrane di-heme cytochromes"/>
    <property type="match status" value="1"/>
</dbReference>
<dbReference type="PROSITE" id="PS51002">
    <property type="entry name" value="CYTB_NTER"/>
    <property type="match status" value="1"/>
</dbReference>
<protein>
    <recommendedName>
        <fullName>Cytochrome b</fullName>
    </recommendedName>
    <alternativeName>
        <fullName>Complex III subunit 3</fullName>
    </alternativeName>
    <alternativeName>
        <fullName>Complex III subunit III</fullName>
    </alternativeName>
    <alternativeName>
        <fullName>Cytochrome b-c1 complex subunit 3</fullName>
    </alternativeName>
    <alternativeName>
        <fullName>Ubiquinol-cytochrome-c reductase complex cytochrome b subunit</fullName>
    </alternativeName>
</protein>
<accession>P16364</accession>
<reference key="1">
    <citation type="journal article" date="1989" name="Proc. Natl. Acad. Sci. U.S.A.">
        <title>Dynamics of mitochondrial DNA evolution in animals: amplification and sequencing with conserved primers.</title>
        <authorList>
            <person name="Kocher T.D."/>
            <person name="Thomas W.K."/>
            <person name="Meyer A."/>
            <person name="Edwards S.V."/>
            <person name="Paeaebo S."/>
            <person name="Villablanca F.X."/>
            <person name="Wilson A.C."/>
        </authorList>
    </citation>
    <scope>NUCLEOTIDE SEQUENCE [GENOMIC DNA]</scope>
</reference>
<geneLocation type="mitochondrion"/>
<evidence type="ECO:0000250" key="1"/>
<evidence type="ECO:0000250" key="2">
    <source>
        <dbReference type="UniProtKB" id="P00157"/>
    </source>
</evidence>
<evidence type="ECO:0000255" key="3">
    <source>
        <dbReference type="PROSITE-ProRule" id="PRU00968"/>
    </source>
</evidence>
<proteinExistence type="inferred from homology"/>
<comment type="function">
    <text evidence="2">Component of the ubiquinol-cytochrome c reductase complex (complex III or cytochrome b-c1 complex) that is part of the mitochondrial respiratory chain. The b-c1 complex mediates electron transfer from ubiquinol to cytochrome c. Contributes to the generation of a proton gradient across the mitochondrial membrane that is then used for ATP synthesis.</text>
</comment>
<comment type="cofactor">
    <cofactor evidence="2">
        <name>heme b</name>
        <dbReference type="ChEBI" id="CHEBI:60344"/>
    </cofactor>
    <text evidence="2">Binds 2 heme b groups non-covalently.</text>
</comment>
<comment type="subunit">
    <text evidence="2">The cytochrome bc1 complex contains 11 subunits: 3 respiratory subunits (MT-CYB, CYC1 and UQCRFS1), 2 core proteins (UQCRC1 and UQCRC2) and 6 low-molecular weight proteins (UQCRH/QCR6, UQCRB/QCR7, UQCRQ/QCR8, UQCR10/QCR9, UQCR11/QCR10 and a cleavage product of UQCRFS1). This cytochrome bc1 complex then forms a dimer.</text>
</comment>
<comment type="subcellular location">
    <subcellularLocation>
        <location evidence="2">Mitochondrion inner membrane</location>
        <topology evidence="2">Multi-pass membrane protein</topology>
    </subcellularLocation>
</comment>
<comment type="miscellaneous">
    <text evidence="1">Heme 1 (or BL or b562) is low-potential and absorbs at about 562 nm, and heme 2 (or BH or b566) is high-potential and absorbs at about 566 nm.</text>
</comment>
<comment type="similarity">
    <text evidence="3">Belongs to the cytochrome b family.</text>
</comment>
<comment type="caution">
    <text evidence="2">The full-length protein contains only eight transmembrane helices, not nine as predicted by bioinformatics tools.</text>
</comment>
<feature type="chain" id="PRO_0000060813" description="Cytochrome b">
    <location>
        <begin position="1" status="less than"/>
        <end position="79" status="greater than"/>
    </location>
</feature>
<feature type="transmembrane region" description="Helical" evidence="2">
    <location>
        <begin position="1" status="less than"/>
        <end position="7"/>
    </location>
</feature>
<feature type="transmembrane region" description="Helical" evidence="2">
    <location>
        <begin position="31"/>
        <end position="52"/>
    </location>
</feature>
<feature type="transmembrane region" description="Helical" evidence="2">
    <location>
        <begin position="67"/>
        <end position="79" status="greater than"/>
    </location>
</feature>
<feature type="binding site" description="axial binding residue" evidence="2">
    <location>
        <position position="37"/>
    </location>
    <ligand>
        <name>heme b</name>
        <dbReference type="ChEBI" id="CHEBI:60344"/>
        <label>b562</label>
    </ligand>
    <ligandPart>
        <name>Fe</name>
        <dbReference type="ChEBI" id="CHEBI:18248"/>
    </ligandPart>
</feature>
<feature type="binding site" description="axial binding residue" evidence="2">
    <location>
        <position position="51"/>
    </location>
    <ligand>
        <name>heme b</name>
        <dbReference type="ChEBI" id="CHEBI:60344"/>
        <label>b566</label>
    </ligand>
    <ligandPart>
        <name>Fe</name>
        <dbReference type="ChEBI" id="CHEBI:18248"/>
    </ligandPart>
</feature>
<feature type="non-terminal residue">
    <location>
        <position position="1"/>
    </location>
</feature>
<feature type="non-terminal residue">
    <location>
        <position position="79"/>
    </location>
</feature>
<name>CYB_CORME</name>
<sequence length="79" mass="8931">TALLLAMHYTADTSLAFTSVAHTCRNVQFGWLIRNLHANGASMFFICIYLHIGRGFYYGSYLNKETWNIGVILLLTLMA</sequence>
<gene>
    <name type="primary">MT-CYB</name>
    <name type="synonym">COB</name>
    <name type="synonym">CYTB</name>
    <name type="synonym">MTCYB</name>
</gene>